<keyword id="KW-1185">Reference proteome</keyword>
<proteinExistence type="predicted"/>
<feature type="chain" id="PRO_0000408429" description="Uncharacterized protein U6">
    <location>
        <begin position="1"/>
        <end position="68"/>
    </location>
</feature>
<name>U6_HHV6Z</name>
<accession>Q9QJ53</accession>
<gene>
    <name type="primary">U6</name>
</gene>
<organismHost>
    <name type="scientific">Homo sapiens</name>
    <name type="common">Human</name>
    <dbReference type="NCBI Taxonomy" id="9606"/>
</organismHost>
<dbReference type="EMBL" id="AF157706">
    <property type="protein sequence ID" value="AAD49624.1"/>
    <property type="molecule type" value="Genomic_DNA"/>
</dbReference>
<dbReference type="RefSeq" id="NP_050188.1">
    <property type="nucleotide sequence ID" value="NC_000898.1"/>
</dbReference>
<dbReference type="DNASU" id="1497008"/>
<dbReference type="GeneID" id="1497008"/>
<dbReference type="KEGG" id="vg:1497008"/>
<dbReference type="Proteomes" id="UP000006930">
    <property type="component" value="Segment"/>
</dbReference>
<sequence length="68" mass="7303">MPNLAAAVPCRPFVNLAQETGTTNLLVAGSRPTNTGVRNFVINLTVSESSSSRRTANRILLRSFTSLL</sequence>
<reference key="1">
    <citation type="journal article" date="1999" name="J. Virol.">
        <title>Human herpesvirus 6B genome sequence: coding content and comparison with human herpesvirus 6A.</title>
        <authorList>
            <person name="Dominguez G."/>
            <person name="Dambaugh T.R."/>
            <person name="Stamey F.R."/>
            <person name="Dewhurst S."/>
            <person name="Inoue N."/>
            <person name="Pellett P.E."/>
        </authorList>
    </citation>
    <scope>NUCLEOTIDE SEQUENCE [LARGE SCALE GENOMIC DNA]</scope>
</reference>
<organism>
    <name type="scientific">Human herpesvirus 6B (strain Z29)</name>
    <name type="common">HHV-6 variant B</name>
    <name type="synonym">Human B lymphotropic virus</name>
    <dbReference type="NCBI Taxonomy" id="36351"/>
    <lineage>
        <taxon>Viruses</taxon>
        <taxon>Duplodnaviria</taxon>
        <taxon>Heunggongvirae</taxon>
        <taxon>Peploviricota</taxon>
        <taxon>Herviviricetes</taxon>
        <taxon>Herpesvirales</taxon>
        <taxon>Orthoherpesviridae</taxon>
        <taxon>Betaherpesvirinae</taxon>
        <taxon>Roseolovirus</taxon>
        <taxon>Roseolovirus humanbeta6b</taxon>
        <taxon>Human herpesvirus 6B</taxon>
    </lineage>
</organism>
<protein>
    <recommendedName>
        <fullName>Uncharacterized protein U6</fullName>
    </recommendedName>
</protein>